<protein>
    <recommendedName>
        <fullName evidence="1">Dihydroxy-acid dehydratase</fullName>
        <shortName evidence="1">DAD</shortName>
        <ecNumber evidence="1">4.2.1.9</ecNumber>
    </recommendedName>
</protein>
<proteinExistence type="inferred from homology"/>
<feature type="chain" id="PRO_1000000967" description="Dihydroxy-acid dehydratase">
    <location>
        <begin position="1"/>
        <end position="619"/>
    </location>
</feature>
<feature type="active site" description="Proton acceptor" evidence="1">
    <location>
        <position position="522"/>
    </location>
</feature>
<feature type="binding site" evidence="1">
    <location>
        <position position="81"/>
    </location>
    <ligand>
        <name>Mg(2+)</name>
        <dbReference type="ChEBI" id="CHEBI:18420"/>
    </ligand>
</feature>
<feature type="binding site" evidence="1">
    <location>
        <position position="122"/>
    </location>
    <ligand>
        <name>[2Fe-2S] cluster</name>
        <dbReference type="ChEBI" id="CHEBI:190135"/>
    </ligand>
</feature>
<feature type="binding site" evidence="1">
    <location>
        <position position="123"/>
    </location>
    <ligand>
        <name>Mg(2+)</name>
        <dbReference type="ChEBI" id="CHEBI:18420"/>
    </ligand>
</feature>
<feature type="binding site" description="via carbamate group" evidence="1">
    <location>
        <position position="124"/>
    </location>
    <ligand>
        <name>Mg(2+)</name>
        <dbReference type="ChEBI" id="CHEBI:18420"/>
    </ligand>
</feature>
<feature type="binding site" evidence="1">
    <location>
        <position position="201"/>
    </location>
    <ligand>
        <name>[2Fe-2S] cluster</name>
        <dbReference type="ChEBI" id="CHEBI:190135"/>
    </ligand>
</feature>
<feature type="binding site" evidence="1">
    <location>
        <position position="496"/>
    </location>
    <ligand>
        <name>Mg(2+)</name>
        <dbReference type="ChEBI" id="CHEBI:18420"/>
    </ligand>
</feature>
<feature type="modified residue" description="N6-carboxylysine" evidence="1">
    <location>
        <position position="124"/>
    </location>
</feature>
<keyword id="KW-0001">2Fe-2S</keyword>
<keyword id="KW-0028">Amino-acid biosynthesis</keyword>
<keyword id="KW-0100">Branched-chain amino acid biosynthesis</keyword>
<keyword id="KW-0408">Iron</keyword>
<keyword id="KW-0411">Iron-sulfur</keyword>
<keyword id="KW-0456">Lyase</keyword>
<keyword id="KW-0460">Magnesium</keyword>
<keyword id="KW-0479">Metal-binding</keyword>
<organism>
    <name type="scientific">Burkholderia vietnamiensis (strain G4 / LMG 22486)</name>
    <name type="common">Burkholderia cepacia (strain R1808)</name>
    <dbReference type="NCBI Taxonomy" id="269482"/>
    <lineage>
        <taxon>Bacteria</taxon>
        <taxon>Pseudomonadati</taxon>
        <taxon>Pseudomonadota</taxon>
        <taxon>Betaproteobacteria</taxon>
        <taxon>Burkholderiales</taxon>
        <taxon>Burkholderiaceae</taxon>
        <taxon>Burkholderia</taxon>
        <taxon>Burkholderia cepacia complex</taxon>
    </lineage>
</organism>
<accession>A4JN03</accession>
<dbReference type="EC" id="4.2.1.9" evidence="1"/>
<dbReference type="EMBL" id="CP000615">
    <property type="protein sequence ID" value="ABO57656.1"/>
    <property type="molecule type" value="Genomic_DNA"/>
</dbReference>
<dbReference type="SMR" id="A4JN03"/>
<dbReference type="KEGG" id="bvi:Bcep1808_4698"/>
<dbReference type="eggNOG" id="COG0129">
    <property type="taxonomic scope" value="Bacteria"/>
</dbReference>
<dbReference type="HOGENOM" id="CLU_014271_4_2_4"/>
<dbReference type="UniPathway" id="UPA00047">
    <property type="reaction ID" value="UER00057"/>
</dbReference>
<dbReference type="UniPathway" id="UPA00049">
    <property type="reaction ID" value="UER00061"/>
</dbReference>
<dbReference type="Proteomes" id="UP000002287">
    <property type="component" value="Chromosome 2"/>
</dbReference>
<dbReference type="GO" id="GO:0005829">
    <property type="term" value="C:cytosol"/>
    <property type="evidence" value="ECO:0007669"/>
    <property type="project" value="TreeGrafter"/>
</dbReference>
<dbReference type="GO" id="GO:0051537">
    <property type="term" value="F:2 iron, 2 sulfur cluster binding"/>
    <property type="evidence" value="ECO:0007669"/>
    <property type="project" value="UniProtKB-UniRule"/>
</dbReference>
<dbReference type="GO" id="GO:0004160">
    <property type="term" value="F:dihydroxy-acid dehydratase activity"/>
    <property type="evidence" value="ECO:0007669"/>
    <property type="project" value="UniProtKB-UniRule"/>
</dbReference>
<dbReference type="GO" id="GO:0000287">
    <property type="term" value="F:magnesium ion binding"/>
    <property type="evidence" value="ECO:0007669"/>
    <property type="project" value="UniProtKB-UniRule"/>
</dbReference>
<dbReference type="GO" id="GO:0009097">
    <property type="term" value="P:isoleucine biosynthetic process"/>
    <property type="evidence" value="ECO:0007669"/>
    <property type="project" value="UniProtKB-UniRule"/>
</dbReference>
<dbReference type="GO" id="GO:0009099">
    <property type="term" value="P:L-valine biosynthetic process"/>
    <property type="evidence" value="ECO:0007669"/>
    <property type="project" value="UniProtKB-UniRule"/>
</dbReference>
<dbReference type="FunFam" id="3.50.30.80:FF:000001">
    <property type="entry name" value="Dihydroxy-acid dehydratase"/>
    <property type="match status" value="1"/>
</dbReference>
<dbReference type="Gene3D" id="3.50.30.80">
    <property type="entry name" value="IlvD/EDD C-terminal domain-like"/>
    <property type="match status" value="1"/>
</dbReference>
<dbReference type="HAMAP" id="MF_00012">
    <property type="entry name" value="IlvD"/>
    <property type="match status" value="1"/>
</dbReference>
<dbReference type="InterPro" id="IPR042096">
    <property type="entry name" value="Dihydro-acid_dehy_C"/>
</dbReference>
<dbReference type="InterPro" id="IPR004404">
    <property type="entry name" value="DihydroxyA_deHydtase"/>
</dbReference>
<dbReference type="InterPro" id="IPR020558">
    <property type="entry name" value="DiOHA_6PGluconate_deHydtase_CS"/>
</dbReference>
<dbReference type="InterPro" id="IPR056740">
    <property type="entry name" value="ILV_EDD_C"/>
</dbReference>
<dbReference type="InterPro" id="IPR000581">
    <property type="entry name" value="ILV_EDD_N"/>
</dbReference>
<dbReference type="InterPro" id="IPR037237">
    <property type="entry name" value="IlvD/EDD_N"/>
</dbReference>
<dbReference type="NCBIfam" id="TIGR00110">
    <property type="entry name" value="ilvD"/>
    <property type="match status" value="1"/>
</dbReference>
<dbReference type="NCBIfam" id="NF009103">
    <property type="entry name" value="PRK12448.1"/>
    <property type="match status" value="1"/>
</dbReference>
<dbReference type="PANTHER" id="PTHR43661">
    <property type="entry name" value="D-XYLONATE DEHYDRATASE"/>
    <property type="match status" value="1"/>
</dbReference>
<dbReference type="PANTHER" id="PTHR43661:SF3">
    <property type="entry name" value="D-XYLONATE DEHYDRATASE YAGF-RELATED"/>
    <property type="match status" value="1"/>
</dbReference>
<dbReference type="Pfam" id="PF24877">
    <property type="entry name" value="ILV_EDD_C"/>
    <property type="match status" value="1"/>
</dbReference>
<dbReference type="Pfam" id="PF00920">
    <property type="entry name" value="ILVD_EDD_N"/>
    <property type="match status" value="1"/>
</dbReference>
<dbReference type="SUPFAM" id="SSF143975">
    <property type="entry name" value="IlvD/EDD N-terminal domain-like"/>
    <property type="match status" value="1"/>
</dbReference>
<dbReference type="SUPFAM" id="SSF52016">
    <property type="entry name" value="LeuD/IlvD-like"/>
    <property type="match status" value="1"/>
</dbReference>
<dbReference type="PROSITE" id="PS00886">
    <property type="entry name" value="ILVD_EDD_1"/>
    <property type="match status" value="1"/>
</dbReference>
<dbReference type="PROSITE" id="PS00887">
    <property type="entry name" value="ILVD_EDD_2"/>
    <property type="match status" value="1"/>
</dbReference>
<sequence length="619" mass="66621">MPTYRSKTSTAGRNMAGARSLWRATGMKDDDFSKPIIAVVNSFTQFVPGHVHLKDLGQLVAREIEAAGGVAKEFNTIAVDDGIAMGHDGMLYSLPSRDIIADSVEYMVNAHCADAMVCISNCDKITPGMLMAAMRLNIPVIFVSGGPMEAGKTRLANPVTKTIELKKLDLVDAMVIAADQSYSDADVAEVERSACPTCGSCSGMFTANSMNCLTEALGLSLPGNGTVVATHADREQLFKRAGRRIVELTRQYYEQDDVRVLPRSVGFNAFENAMTLDIAMGGSTNTILHLLAIAREAGIDFTMRDIDRLSRVVPQLCKVAPNTNKYHIEDVHRAGGIMAILGELDRAGRLHTDVPTVHAPTLKDALDQWDIVRTQDEAVRKFYLAGPAGVPTQIAFSQDTRWPSLDLDRAEGCIRSYEHAFSKEGGLAVLTGNIALDGCVVKTAGVDESILVFEGSAHVTESQDEAVENILNDKVKAGDVVIVRYEGPKGGPGMQEMLYPTSYIKSKGLGKACALLTDGRFSGGTSGLSIGHCSPEAAAGGAIGLVRDGDRIRIDIPNRTIDVLVSDEELARRREEQNAKGWKPAQPRPRKVSAALKAYAKLVMSADKGAVRDLSLLDD</sequence>
<evidence type="ECO:0000255" key="1">
    <source>
        <dbReference type="HAMAP-Rule" id="MF_00012"/>
    </source>
</evidence>
<comment type="function">
    <text evidence="1">Functions in the biosynthesis of branched-chain amino acids. Catalyzes the dehydration of (2R,3R)-2,3-dihydroxy-3-methylpentanoate (2,3-dihydroxy-3-methylvalerate) into 2-oxo-3-methylpentanoate (2-oxo-3-methylvalerate) and of (2R)-2,3-dihydroxy-3-methylbutanoate (2,3-dihydroxyisovalerate) into 2-oxo-3-methylbutanoate (2-oxoisovalerate), the penultimate precursor to L-isoleucine and L-valine, respectively.</text>
</comment>
<comment type="catalytic activity">
    <reaction evidence="1">
        <text>(2R)-2,3-dihydroxy-3-methylbutanoate = 3-methyl-2-oxobutanoate + H2O</text>
        <dbReference type="Rhea" id="RHEA:24809"/>
        <dbReference type="ChEBI" id="CHEBI:11851"/>
        <dbReference type="ChEBI" id="CHEBI:15377"/>
        <dbReference type="ChEBI" id="CHEBI:49072"/>
        <dbReference type="EC" id="4.2.1.9"/>
    </reaction>
    <physiologicalReaction direction="left-to-right" evidence="1">
        <dbReference type="Rhea" id="RHEA:24810"/>
    </physiologicalReaction>
</comment>
<comment type="catalytic activity">
    <reaction evidence="1">
        <text>(2R,3R)-2,3-dihydroxy-3-methylpentanoate = (S)-3-methyl-2-oxopentanoate + H2O</text>
        <dbReference type="Rhea" id="RHEA:27694"/>
        <dbReference type="ChEBI" id="CHEBI:15377"/>
        <dbReference type="ChEBI" id="CHEBI:35146"/>
        <dbReference type="ChEBI" id="CHEBI:49258"/>
        <dbReference type="EC" id="4.2.1.9"/>
    </reaction>
    <physiologicalReaction direction="left-to-right" evidence="1">
        <dbReference type="Rhea" id="RHEA:27695"/>
    </physiologicalReaction>
</comment>
<comment type="cofactor">
    <cofactor evidence="1">
        <name>[2Fe-2S] cluster</name>
        <dbReference type="ChEBI" id="CHEBI:190135"/>
    </cofactor>
    <text evidence="1">Binds 1 [2Fe-2S] cluster per subunit. This cluster acts as a Lewis acid cofactor.</text>
</comment>
<comment type="cofactor">
    <cofactor evidence="1">
        <name>Mg(2+)</name>
        <dbReference type="ChEBI" id="CHEBI:18420"/>
    </cofactor>
</comment>
<comment type="pathway">
    <text evidence="1">Amino-acid biosynthesis; L-isoleucine biosynthesis; L-isoleucine from 2-oxobutanoate: step 3/4.</text>
</comment>
<comment type="pathway">
    <text evidence="1">Amino-acid biosynthesis; L-valine biosynthesis; L-valine from pyruvate: step 3/4.</text>
</comment>
<comment type="subunit">
    <text evidence="1">Homodimer.</text>
</comment>
<comment type="similarity">
    <text evidence="1">Belongs to the IlvD/Edd family.</text>
</comment>
<name>ILVD_BURVG</name>
<reference key="1">
    <citation type="submission" date="2007-03" db="EMBL/GenBank/DDBJ databases">
        <title>Complete sequence of chromosome 2 of Burkholderia vietnamiensis G4.</title>
        <authorList>
            <consortium name="US DOE Joint Genome Institute"/>
            <person name="Copeland A."/>
            <person name="Lucas S."/>
            <person name="Lapidus A."/>
            <person name="Barry K."/>
            <person name="Detter J.C."/>
            <person name="Glavina del Rio T."/>
            <person name="Hammon N."/>
            <person name="Israni S."/>
            <person name="Dalin E."/>
            <person name="Tice H."/>
            <person name="Pitluck S."/>
            <person name="Chain P."/>
            <person name="Malfatti S."/>
            <person name="Shin M."/>
            <person name="Vergez L."/>
            <person name="Schmutz J."/>
            <person name="Larimer F."/>
            <person name="Land M."/>
            <person name="Hauser L."/>
            <person name="Kyrpides N."/>
            <person name="Tiedje J."/>
            <person name="Richardson P."/>
        </authorList>
    </citation>
    <scope>NUCLEOTIDE SEQUENCE [LARGE SCALE GENOMIC DNA]</scope>
    <source>
        <strain>G4 / LMG 22486</strain>
    </source>
</reference>
<gene>
    <name evidence="1" type="primary">ilvD</name>
    <name type="ordered locus">Bcep1808_4698</name>
</gene>